<keyword id="KW-0997">Cell inner membrane</keyword>
<keyword id="KW-1003">Cell membrane</keyword>
<keyword id="KW-0249">Electron transport</keyword>
<keyword id="KW-0285">Flavoprotein</keyword>
<keyword id="KW-0288">FMN</keyword>
<keyword id="KW-0472">Membrane</keyword>
<keyword id="KW-0597">Phosphoprotein</keyword>
<keyword id="KW-1278">Translocase</keyword>
<keyword id="KW-0812">Transmembrane</keyword>
<keyword id="KW-1133">Transmembrane helix</keyword>
<keyword id="KW-0813">Transport</keyword>
<sequence>MQIASSPFTHNQRSTRRIMLLVILACIPGIIAQTYFFGYGSLIQVMLAMITALLAEGAVLQLRKQPVMARLQDNSALLTALLLGISLPPLAPWWMIVLGTLFAIVIAKQLYGGLGQNPFNPAMVGYVVLLISFPVQMTSWLPPLPLQGTSVGFYDSLLTIFTGYTHSGENIHQLQVGYDGISQATPLDTFKTSLRSQPADQILQQPIFGGVLAGLGWQWVNLGFLVGGLLLLWRKAIHWHIPVSFLLALGGCAAVSWMIAPQSFASPMLHLFSGATMLGAFFIATDPVSASTTPRGRLIFGALIGILVWLIRVYGGYPDGVAFAVLLANITVPLIDHYTQPRVYGHKSGHK</sequence>
<reference key="1">
    <citation type="journal article" date="2007" name="PLoS Genet.">
        <title>The complete genome sequence of Yersinia pseudotuberculosis IP31758, the causative agent of Far East scarlet-like fever.</title>
        <authorList>
            <person name="Eppinger M."/>
            <person name="Rosovitz M.J."/>
            <person name="Fricke W.F."/>
            <person name="Rasko D.A."/>
            <person name="Kokorina G."/>
            <person name="Fayolle C."/>
            <person name="Lindler L.E."/>
            <person name="Carniel E."/>
            <person name="Ravel J."/>
        </authorList>
    </citation>
    <scope>NUCLEOTIDE SEQUENCE [LARGE SCALE GENOMIC DNA]</scope>
    <source>
        <strain>IP 31758</strain>
    </source>
</reference>
<dbReference type="EC" id="7.-.-.-" evidence="1"/>
<dbReference type="EMBL" id="CP000720">
    <property type="protein sequence ID" value="ABS49473.1"/>
    <property type="molecule type" value="Genomic_DNA"/>
</dbReference>
<dbReference type="SMR" id="A7FHZ5"/>
<dbReference type="KEGG" id="ypi:YpsIP31758_1898"/>
<dbReference type="HOGENOM" id="CLU_042020_0_0_6"/>
<dbReference type="Proteomes" id="UP000002412">
    <property type="component" value="Chromosome"/>
</dbReference>
<dbReference type="GO" id="GO:0005886">
    <property type="term" value="C:plasma membrane"/>
    <property type="evidence" value="ECO:0007669"/>
    <property type="project" value="UniProtKB-SubCell"/>
</dbReference>
<dbReference type="GO" id="GO:0022900">
    <property type="term" value="P:electron transport chain"/>
    <property type="evidence" value="ECO:0007669"/>
    <property type="project" value="UniProtKB-UniRule"/>
</dbReference>
<dbReference type="GO" id="GO:0055085">
    <property type="term" value="P:transmembrane transport"/>
    <property type="evidence" value="ECO:0007669"/>
    <property type="project" value="InterPro"/>
</dbReference>
<dbReference type="HAMAP" id="MF_00462">
    <property type="entry name" value="RsxD_RnfD"/>
    <property type="match status" value="1"/>
</dbReference>
<dbReference type="InterPro" id="IPR004338">
    <property type="entry name" value="NqrB/RnfD"/>
</dbReference>
<dbReference type="InterPro" id="IPR011303">
    <property type="entry name" value="RnfD_bac"/>
</dbReference>
<dbReference type="NCBIfam" id="NF002011">
    <property type="entry name" value="PRK00816.1"/>
    <property type="match status" value="1"/>
</dbReference>
<dbReference type="NCBIfam" id="TIGR01946">
    <property type="entry name" value="rnfD"/>
    <property type="match status" value="1"/>
</dbReference>
<dbReference type="PANTHER" id="PTHR30578">
    <property type="entry name" value="ELECTRON TRANSPORT COMPLEX PROTEIN RNFD"/>
    <property type="match status" value="1"/>
</dbReference>
<dbReference type="PANTHER" id="PTHR30578:SF0">
    <property type="entry name" value="ION-TRANSLOCATING OXIDOREDUCTASE COMPLEX SUBUNIT D"/>
    <property type="match status" value="1"/>
</dbReference>
<dbReference type="Pfam" id="PF03116">
    <property type="entry name" value="NQR2_RnfD_RnfE"/>
    <property type="match status" value="1"/>
</dbReference>
<feature type="chain" id="PRO_1000060345" description="Ion-translocating oxidoreductase complex subunit D">
    <location>
        <begin position="1"/>
        <end position="351"/>
    </location>
</feature>
<feature type="transmembrane region" description="Helical" evidence="1">
    <location>
        <begin position="18"/>
        <end position="38"/>
    </location>
</feature>
<feature type="transmembrane region" description="Helical" evidence="1">
    <location>
        <begin position="40"/>
        <end position="60"/>
    </location>
</feature>
<feature type="transmembrane region" description="Helical" evidence="1">
    <location>
        <begin position="87"/>
        <end position="107"/>
    </location>
</feature>
<feature type="transmembrane region" description="Helical" evidence="1">
    <location>
        <begin position="121"/>
        <end position="141"/>
    </location>
</feature>
<feature type="transmembrane region" description="Helical" evidence="1">
    <location>
        <begin position="211"/>
        <end position="231"/>
    </location>
</feature>
<feature type="transmembrane region" description="Helical" evidence="1">
    <location>
        <begin position="241"/>
        <end position="261"/>
    </location>
</feature>
<feature type="transmembrane region" description="Helical" evidence="1">
    <location>
        <begin position="264"/>
        <end position="284"/>
    </location>
</feature>
<feature type="transmembrane region" description="Helical" evidence="1">
    <location>
        <begin position="298"/>
        <end position="318"/>
    </location>
</feature>
<feature type="transmembrane region" description="Helical" evidence="1">
    <location>
        <begin position="320"/>
        <end position="340"/>
    </location>
</feature>
<feature type="modified residue" description="FMN phosphoryl threonine" evidence="1">
    <location>
        <position position="185"/>
    </location>
</feature>
<name>RNFD_YERP3</name>
<protein>
    <recommendedName>
        <fullName evidence="1">Ion-translocating oxidoreductase complex subunit D</fullName>
        <ecNumber evidence="1">7.-.-.-</ecNumber>
    </recommendedName>
    <alternativeName>
        <fullName evidence="1">Rnf electron transport complex subunit D</fullName>
    </alternativeName>
</protein>
<accession>A7FHZ5</accession>
<gene>
    <name evidence="1" type="primary">rnfD</name>
    <name type="ordered locus">YpsIP31758_1898</name>
</gene>
<proteinExistence type="inferred from homology"/>
<evidence type="ECO:0000255" key="1">
    <source>
        <dbReference type="HAMAP-Rule" id="MF_00462"/>
    </source>
</evidence>
<comment type="function">
    <text evidence="1">Part of a membrane-bound complex that couples electron transfer with translocation of ions across the membrane.</text>
</comment>
<comment type="cofactor">
    <cofactor evidence="1">
        <name>FMN</name>
        <dbReference type="ChEBI" id="CHEBI:58210"/>
    </cofactor>
</comment>
<comment type="subunit">
    <text evidence="1">The complex is composed of six subunits: RnfA, RnfB, RnfC, RnfD, RnfE and RnfG.</text>
</comment>
<comment type="subcellular location">
    <subcellularLocation>
        <location evidence="1">Cell inner membrane</location>
        <topology evidence="1">Multi-pass membrane protein</topology>
    </subcellularLocation>
</comment>
<comment type="similarity">
    <text evidence="1">Belongs to the NqrB/RnfD family.</text>
</comment>
<organism>
    <name type="scientific">Yersinia pseudotuberculosis serotype O:1b (strain IP 31758)</name>
    <dbReference type="NCBI Taxonomy" id="349747"/>
    <lineage>
        <taxon>Bacteria</taxon>
        <taxon>Pseudomonadati</taxon>
        <taxon>Pseudomonadota</taxon>
        <taxon>Gammaproteobacteria</taxon>
        <taxon>Enterobacterales</taxon>
        <taxon>Yersiniaceae</taxon>
        <taxon>Yersinia</taxon>
    </lineage>
</organism>